<organism>
    <name type="scientific">Escherichia coli O8 (strain IAI1)</name>
    <dbReference type="NCBI Taxonomy" id="585034"/>
    <lineage>
        <taxon>Bacteria</taxon>
        <taxon>Pseudomonadati</taxon>
        <taxon>Pseudomonadota</taxon>
        <taxon>Gammaproteobacteria</taxon>
        <taxon>Enterobacterales</taxon>
        <taxon>Enterobacteriaceae</taxon>
        <taxon>Escherichia</taxon>
    </lineage>
</organism>
<feature type="signal peptide" evidence="1">
    <location>
        <begin position="1"/>
        <end position="26"/>
    </location>
</feature>
<feature type="chain" id="PRO_1000138212" description="Cytochrome c-552">
    <location>
        <begin position="27"/>
        <end position="478"/>
    </location>
</feature>
<feature type="binding site" description="axial binding residue" evidence="1">
    <location>
        <position position="94"/>
    </location>
    <ligand>
        <name>heme c</name>
        <dbReference type="ChEBI" id="CHEBI:61717"/>
        <label>3</label>
    </ligand>
    <ligandPart>
        <name>Fe</name>
        <dbReference type="ChEBI" id="CHEBI:18248"/>
    </ligandPart>
</feature>
<feature type="binding site" description="covalent" evidence="1">
    <location>
        <position position="122"/>
    </location>
    <ligand>
        <name>heme</name>
        <dbReference type="ChEBI" id="CHEBI:30413"/>
        <label>1</label>
    </ligand>
</feature>
<feature type="binding site" description="covalent" evidence="1">
    <location>
        <position position="125"/>
    </location>
    <ligand>
        <name>heme</name>
        <dbReference type="ChEBI" id="CHEBI:30413"/>
        <label>1</label>
    </ligand>
</feature>
<feature type="binding site" description="axial binding residue" evidence="1">
    <location>
        <position position="126"/>
    </location>
    <ligand>
        <name>heme</name>
        <dbReference type="ChEBI" id="CHEBI:30413"/>
        <label>1</label>
    </ligand>
    <ligandPart>
        <name>Fe</name>
        <dbReference type="ChEBI" id="CHEBI:18248"/>
    </ligandPart>
</feature>
<feature type="binding site" description="covalent" evidence="1">
    <location>
        <position position="160"/>
    </location>
    <ligand>
        <name>heme c</name>
        <dbReference type="ChEBI" id="CHEBI:61717"/>
        <label>2</label>
    </ligand>
</feature>
<feature type="binding site" description="covalent" evidence="1">
    <location>
        <position position="163"/>
    </location>
    <ligand>
        <name>heme c</name>
        <dbReference type="ChEBI" id="CHEBI:61717"/>
        <label>2</label>
    </ligand>
</feature>
<feature type="binding site" description="axial binding residue" evidence="1">
    <location>
        <position position="164"/>
    </location>
    <ligand>
        <name>heme c</name>
        <dbReference type="ChEBI" id="CHEBI:61717"/>
        <label>2</label>
    </ligand>
    <ligandPart>
        <name>Fe</name>
        <dbReference type="ChEBI" id="CHEBI:18248"/>
    </ligandPart>
</feature>
<feature type="binding site" description="covalent" evidence="1">
    <location>
        <position position="209"/>
    </location>
    <ligand>
        <name>heme c</name>
        <dbReference type="ChEBI" id="CHEBI:61717"/>
        <label>3</label>
    </ligand>
</feature>
<feature type="binding site" description="covalent" evidence="1">
    <location>
        <position position="212"/>
    </location>
    <ligand>
        <name>heme c</name>
        <dbReference type="ChEBI" id="CHEBI:61717"/>
        <label>3</label>
    </ligand>
</feature>
<feature type="binding site" description="axial binding residue" evidence="1">
    <location>
        <position position="213"/>
    </location>
    <ligand>
        <name>heme c</name>
        <dbReference type="ChEBI" id="CHEBI:61717"/>
        <label>3</label>
    </ligand>
    <ligandPart>
        <name>Fe</name>
        <dbReference type="ChEBI" id="CHEBI:18248"/>
    </ligandPart>
</feature>
<feature type="binding site" evidence="1">
    <location>
        <position position="215"/>
    </location>
    <ligand>
        <name>Ca(2+)</name>
        <dbReference type="ChEBI" id="CHEBI:29108"/>
    </ligand>
</feature>
<feature type="binding site" evidence="1">
    <location>
        <position position="216"/>
    </location>
    <ligand>
        <name>Ca(2+)</name>
        <dbReference type="ChEBI" id="CHEBI:29108"/>
    </ligand>
</feature>
<feature type="binding site" evidence="1">
    <location>
        <position position="216"/>
    </location>
    <ligand>
        <name>substrate</name>
    </ligand>
</feature>
<feature type="binding site" evidence="1">
    <location>
        <position position="261"/>
    </location>
    <ligand>
        <name>Ca(2+)</name>
        <dbReference type="ChEBI" id="CHEBI:29108"/>
    </ligand>
</feature>
<feature type="binding site" evidence="1">
    <location>
        <position position="263"/>
    </location>
    <ligand>
        <name>Ca(2+)</name>
        <dbReference type="ChEBI" id="CHEBI:29108"/>
    </ligand>
</feature>
<feature type="binding site" evidence="1">
    <location>
        <position position="264"/>
    </location>
    <ligand>
        <name>substrate</name>
    </ligand>
</feature>
<feature type="binding site" description="axial binding residue" evidence="1">
    <location>
        <position position="275"/>
    </location>
    <ligand>
        <name>heme c</name>
        <dbReference type="ChEBI" id="CHEBI:61717"/>
        <label>5</label>
    </ligand>
    <ligandPart>
        <name>Fe</name>
        <dbReference type="ChEBI" id="CHEBI:18248"/>
    </ligandPart>
</feature>
<feature type="binding site" description="covalent" evidence="1">
    <location>
        <position position="282"/>
    </location>
    <ligand>
        <name>heme c</name>
        <dbReference type="ChEBI" id="CHEBI:61717"/>
        <label>4</label>
    </ligand>
</feature>
<feature type="binding site" description="covalent" evidence="1">
    <location>
        <position position="285"/>
    </location>
    <ligand>
        <name>heme c</name>
        <dbReference type="ChEBI" id="CHEBI:61717"/>
        <label>4</label>
    </ligand>
</feature>
<feature type="binding site" description="axial binding residue" evidence="1">
    <location>
        <position position="286"/>
    </location>
    <ligand>
        <name>heme c</name>
        <dbReference type="ChEBI" id="CHEBI:61717"/>
        <label>4</label>
    </ligand>
    <ligandPart>
        <name>Fe</name>
        <dbReference type="ChEBI" id="CHEBI:18248"/>
    </ligandPart>
</feature>
<feature type="binding site" description="axial binding residue" evidence="1">
    <location>
        <position position="301"/>
    </location>
    <ligand>
        <name>heme c</name>
        <dbReference type="ChEBI" id="CHEBI:61717"/>
        <label>2</label>
    </ligand>
    <ligandPart>
        <name>Fe</name>
        <dbReference type="ChEBI" id="CHEBI:18248"/>
    </ligandPart>
</feature>
<feature type="binding site" description="covalent" evidence="1">
    <location>
        <position position="314"/>
    </location>
    <ligand>
        <name>heme c</name>
        <dbReference type="ChEBI" id="CHEBI:61717"/>
        <label>5</label>
    </ligand>
</feature>
<feature type="binding site" description="covalent" evidence="1">
    <location>
        <position position="317"/>
    </location>
    <ligand>
        <name>heme c</name>
        <dbReference type="ChEBI" id="CHEBI:61717"/>
        <label>5</label>
    </ligand>
</feature>
<feature type="binding site" description="axial binding residue" evidence="1">
    <location>
        <position position="318"/>
    </location>
    <ligand>
        <name>heme c</name>
        <dbReference type="ChEBI" id="CHEBI:61717"/>
        <label>5</label>
    </ligand>
    <ligandPart>
        <name>Fe</name>
        <dbReference type="ChEBI" id="CHEBI:18248"/>
    </ligandPart>
</feature>
<feature type="binding site" description="axial binding residue" evidence="1">
    <location>
        <position position="393"/>
    </location>
    <ligand>
        <name>heme c</name>
        <dbReference type="ChEBI" id="CHEBI:61717"/>
        <label>4</label>
    </ligand>
    <ligandPart>
        <name>Fe</name>
        <dbReference type="ChEBI" id="CHEBI:18248"/>
    </ligandPart>
</feature>
<comment type="function">
    <text evidence="1">Catalyzes the reduction of nitrite to ammonia, consuming six electrons in the process.</text>
</comment>
<comment type="catalytic activity">
    <reaction evidence="1">
        <text>6 Fe(III)-[cytochrome c] + NH4(+) + 2 H2O = 6 Fe(II)-[cytochrome c] + nitrite + 8 H(+)</text>
        <dbReference type="Rhea" id="RHEA:13089"/>
        <dbReference type="Rhea" id="RHEA-COMP:10350"/>
        <dbReference type="Rhea" id="RHEA-COMP:14399"/>
        <dbReference type="ChEBI" id="CHEBI:15377"/>
        <dbReference type="ChEBI" id="CHEBI:15378"/>
        <dbReference type="ChEBI" id="CHEBI:16301"/>
        <dbReference type="ChEBI" id="CHEBI:28938"/>
        <dbReference type="ChEBI" id="CHEBI:29033"/>
        <dbReference type="ChEBI" id="CHEBI:29034"/>
        <dbReference type="EC" id="1.7.2.2"/>
    </reaction>
</comment>
<comment type="cofactor">
    <cofactor evidence="1">
        <name>Ca(2+)</name>
        <dbReference type="ChEBI" id="CHEBI:29108"/>
    </cofactor>
    <text evidence="1">Binds 1 Ca(2+) ion per monomer.</text>
</comment>
<comment type="cofactor">
    <cofactor evidence="1">
        <name>heme c</name>
        <dbReference type="ChEBI" id="CHEBI:61717"/>
    </cofactor>
    <text evidence="1">Binds 5 heme c groups covalently per monomer.</text>
</comment>
<comment type="pathway">
    <text evidence="1">Nitrogen metabolism; nitrate reduction (assimilation).</text>
</comment>
<comment type="subcellular location">
    <subcellularLocation>
        <location evidence="1">Periplasm</location>
    </subcellularLocation>
</comment>
<comment type="similarity">
    <text evidence="1">Belongs to the cytochrome c-552 family.</text>
</comment>
<evidence type="ECO:0000255" key="1">
    <source>
        <dbReference type="HAMAP-Rule" id="MF_01182"/>
    </source>
</evidence>
<proteinExistence type="inferred from homology"/>
<protein>
    <recommendedName>
        <fullName evidence="1">Cytochrome c-552</fullName>
        <ecNumber evidence="1">1.7.2.2</ecNumber>
    </recommendedName>
    <alternativeName>
        <fullName evidence="1">Ammonia-forming cytochrome c nitrite reductase</fullName>
        <shortName evidence="1">Cytochrome c nitrite reductase</shortName>
    </alternativeName>
</protein>
<accession>B7M7Y3</accession>
<sequence length="478" mass="53703">MTRIKINARRIFSLLIPFFFFTSVHAEQTAAPAKPVTVEAKNETFAPQHPDQYLSWKATSEQSERVDALAEDPRLVILWAGYPFSRDYNKPRGHAFAVTDVRETLRTGAPKNAEDGPLPMACWSCKSPDVARLIQKDGEDGYFHGKWARGGPEIVNNLGCADCHNTASPEFAKGKPELTLSRPYAARAMEAIGKPFEKAGRFDQQSMVCGQCHVEYYFDGKNKAVKFPWDDGMKVENMEQYYDKIAFSDWTNSLSKTPMLKAQHPEYETWTAGIHGKNNVTCIDCHMPKVQNAEGKLYTDHKIGNPFDNFAQTCANCHTQDKAALQKVVAERKQSINDLKIKVEDQLVHAHFEAKAALDAGATEAEMKPIQDDIRHAQWRWDLAIASHGIHMHAPEEGLRMLGTAMDKAADARTKLARLLATKGITHEIQIPDISTKEKAQQAIGLNMEQIKAEKQDFIKTVIPQWEEQARKNGLLSQ</sequence>
<dbReference type="EC" id="1.7.2.2" evidence="1"/>
<dbReference type="EMBL" id="CU928160">
    <property type="protein sequence ID" value="CAR01050.1"/>
    <property type="molecule type" value="Genomic_DNA"/>
</dbReference>
<dbReference type="RefSeq" id="WP_000196875.1">
    <property type="nucleotide sequence ID" value="NC_011741.1"/>
</dbReference>
<dbReference type="SMR" id="B7M7Y3"/>
<dbReference type="GeneID" id="93777759"/>
<dbReference type="KEGG" id="ecr:ECIAI1_4304"/>
<dbReference type="HOGENOM" id="CLU_035040_1_0_6"/>
<dbReference type="UniPathway" id="UPA00653"/>
<dbReference type="GO" id="GO:0030288">
    <property type="term" value="C:outer membrane-bounded periplasmic space"/>
    <property type="evidence" value="ECO:0007669"/>
    <property type="project" value="TreeGrafter"/>
</dbReference>
<dbReference type="GO" id="GO:0005509">
    <property type="term" value="F:calcium ion binding"/>
    <property type="evidence" value="ECO:0007669"/>
    <property type="project" value="UniProtKB-UniRule"/>
</dbReference>
<dbReference type="GO" id="GO:0020037">
    <property type="term" value="F:heme binding"/>
    <property type="evidence" value="ECO:0007669"/>
    <property type="project" value="InterPro"/>
</dbReference>
<dbReference type="GO" id="GO:0005506">
    <property type="term" value="F:iron ion binding"/>
    <property type="evidence" value="ECO:0007669"/>
    <property type="project" value="UniProtKB-UniRule"/>
</dbReference>
<dbReference type="GO" id="GO:0042279">
    <property type="term" value="F:nitrite reductase (cytochrome, ammonia-forming) activity"/>
    <property type="evidence" value="ECO:0007669"/>
    <property type="project" value="UniProtKB-UniRule"/>
</dbReference>
<dbReference type="GO" id="GO:0019645">
    <property type="term" value="P:anaerobic electron transport chain"/>
    <property type="evidence" value="ECO:0007669"/>
    <property type="project" value="TreeGrafter"/>
</dbReference>
<dbReference type="GO" id="GO:0042128">
    <property type="term" value="P:nitrate assimilation"/>
    <property type="evidence" value="ECO:0007669"/>
    <property type="project" value="UniProtKB-UniRule"/>
</dbReference>
<dbReference type="CDD" id="cd00548">
    <property type="entry name" value="NrfA-like"/>
    <property type="match status" value="1"/>
</dbReference>
<dbReference type="FunFam" id="1.10.1130.10:FF:000002">
    <property type="entry name" value="Cytochrome c-552"/>
    <property type="match status" value="1"/>
</dbReference>
<dbReference type="FunFam" id="1.20.140.10:FF:000014">
    <property type="entry name" value="Cytochrome c-552"/>
    <property type="match status" value="1"/>
</dbReference>
<dbReference type="Gene3D" id="1.20.140.10">
    <property type="entry name" value="Butyryl-CoA Dehydrogenase, subunit A, domain 3"/>
    <property type="match status" value="1"/>
</dbReference>
<dbReference type="Gene3D" id="1.10.1130.10">
    <property type="entry name" value="Flavocytochrome C3, Chain A"/>
    <property type="match status" value="1"/>
</dbReference>
<dbReference type="HAMAP" id="MF_01182">
    <property type="entry name" value="Cytochrom_C552"/>
    <property type="match status" value="1"/>
</dbReference>
<dbReference type="InterPro" id="IPR003321">
    <property type="entry name" value="Cyt_c552"/>
</dbReference>
<dbReference type="InterPro" id="IPR017570">
    <property type="entry name" value="Cyt_c_NO2Rdtase_formate-dep"/>
</dbReference>
<dbReference type="InterPro" id="IPR036280">
    <property type="entry name" value="Multihaem_cyt_sf"/>
</dbReference>
<dbReference type="NCBIfam" id="TIGR03152">
    <property type="entry name" value="cyto_c552_HCOOH"/>
    <property type="match status" value="1"/>
</dbReference>
<dbReference type="NCBIfam" id="NF008339">
    <property type="entry name" value="PRK11125.1"/>
    <property type="match status" value="1"/>
</dbReference>
<dbReference type="PANTHER" id="PTHR30633:SF0">
    <property type="entry name" value="CYTOCHROME C-552"/>
    <property type="match status" value="1"/>
</dbReference>
<dbReference type="PANTHER" id="PTHR30633">
    <property type="entry name" value="CYTOCHROME C-552 RESPIRATORY NITRITE REDUCTASE"/>
    <property type="match status" value="1"/>
</dbReference>
<dbReference type="Pfam" id="PF02335">
    <property type="entry name" value="Cytochrom_C552"/>
    <property type="match status" value="1"/>
</dbReference>
<dbReference type="PIRSF" id="PIRSF000243">
    <property type="entry name" value="Cyt_c552"/>
    <property type="match status" value="1"/>
</dbReference>
<dbReference type="SUPFAM" id="SSF48695">
    <property type="entry name" value="Multiheme cytochromes"/>
    <property type="match status" value="1"/>
</dbReference>
<dbReference type="PROSITE" id="PS51008">
    <property type="entry name" value="MULTIHEME_CYTC"/>
    <property type="match status" value="1"/>
</dbReference>
<reference key="1">
    <citation type="journal article" date="2009" name="PLoS Genet.">
        <title>Organised genome dynamics in the Escherichia coli species results in highly diverse adaptive paths.</title>
        <authorList>
            <person name="Touchon M."/>
            <person name="Hoede C."/>
            <person name="Tenaillon O."/>
            <person name="Barbe V."/>
            <person name="Baeriswyl S."/>
            <person name="Bidet P."/>
            <person name="Bingen E."/>
            <person name="Bonacorsi S."/>
            <person name="Bouchier C."/>
            <person name="Bouvet O."/>
            <person name="Calteau A."/>
            <person name="Chiapello H."/>
            <person name="Clermont O."/>
            <person name="Cruveiller S."/>
            <person name="Danchin A."/>
            <person name="Diard M."/>
            <person name="Dossat C."/>
            <person name="Karoui M.E."/>
            <person name="Frapy E."/>
            <person name="Garry L."/>
            <person name="Ghigo J.M."/>
            <person name="Gilles A.M."/>
            <person name="Johnson J."/>
            <person name="Le Bouguenec C."/>
            <person name="Lescat M."/>
            <person name="Mangenot S."/>
            <person name="Martinez-Jehanne V."/>
            <person name="Matic I."/>
            <person name="Nassif X."/>
            <person name="Oztas S."/>
            <person name="Petit M.A."/>
            <person name="Pichon C."/>
            <person name="Rouy Z."/>
            <person name="Ruf C.S."/>
            <person name="Schneider D."/>
            <person name="Tourret J."/>
            <person name="Vacherie B."/>
            <person name="Vallenet D."/>
            <person name="Medigue C."/>
            <person name="Rocha E.P.C."/>
            <person name="Denamur E."/>
        </authorList>
    </citation>
    <scope>NUCLEOTIDE SEQUENCE [LARGE SCALE GENOMIC DNA]</scope>
    <source>
        <strain>IAI1</strain>
    </source>
</reference>
<gene>
    <name evidence="1" type="primary">nrfA</name>
    <name type="ordered locus">ECIAI1_4304</name>
</gene>
<name>NRFA_ECO8A</name>
<keyword id="KW-0106">Calcium</keyword>
<keyword id="KW-0249">Electron transport</keyword>
<keyword id="KW-0349">Heme</keyword>
<keyword id="KW-0408">Iron</keyword>
<keyword id="KW-0479">Metal-binding</keyword>
<keyword id="KW-0560">Oxidoreductase</keyword>
<keyword id="KW-0574">Periplasm</keyword>
<keyword id="KW-0732">Signal</keyword>
<keyword id="KW-0813">Transport</keyword>